<gene>
    <name evidence="1" type="primary">murC</name>
    <name type="ordered locus">YPTB0689</name>
</gene>
<proteinExistence type="inferred from homology"/>
<protein>
    <recommendedName>
        <fullName evidence="1">UDP-N-acetylmuramate--L-alanine ligase</fullName>
        <ecNumber evidence="1">6.3.2.8</ecNumber>
    </recommendedName>
    <alternativeName>
        <fullName evidence="1">UDP-N-acetylmuramoyl-L-alanine synthetase</fullName>
    </alternativeName>
</protein>
<accession>Q66EK4</accession>
<organism>
    <name type="scientific">Yersinia pseudotuberculosis serotype I (strain IP32953)</name>
    <dbReference type="NCBI Taxonomy" id="273123"/>
    <lineage>
        <taxon>Bacteria</taxon>
        <taxon>Pseudomonadati</taxon>
        <taxon>Pseudomonadota</taxon>
        <taxon>Gammaproteobacteria</taxon>
        <taxon>Enterobacterales</taxon>
        <taxon>Yersiniaceae</taxon>
        <taxon>Yersinia</taxon>
    </lineage>
</organism>
<evidence type="ECO:0000255" key="1">
    <source>
        <dbReference type="HAMAP-Rule" id="MF_00046"/>
    </source>
</evidence>
<feature type="chain" id="PRO_0000182191" description="UDP-N-acetylmuramate--L-alanine ligase">
    <location>
        <begin position="1"/>
        <end position="491"/>
    </location>
</feature>
<feature type="binding site" evidence="1">
    <location>
        <begin position="126"/>
        <end position="132"/>
    </location>
    <ligand>
        <name>ATP</name>
        <dbReference type="ChEBI" id="CHEBI:30616"/>
    </ligand>
</feature>
<dbReference type="EC" id="6.3.2.8" evidence="1"/>
<dbReference type="EMBL" id="BX936398">
    <property type="protein sequence ID" value="CAH19929.1"/>
    <property type="molecule type" value="Genomic_DNA"/>
</dbReference>
<dbReference type="RefSeq" id="WP_002216457.1">
    <property type="nucleotide sequence ID" value="NZ_CP009712.1"/>
</dbReference>
<dbReference type="SMR" id="Q66EK4"/>
<dbReference type="GeneID" id="57974059"/>
<dbReference type="KEGG" id="ypo:BZ17_1866"/>
<dbReference type="KEGG" id="yps:YPTB0689"/>
<dbReference type="PATRIC" id="fig|273123.14.peg.1980"/>
<dbReference type="UniPathway" id="UPA00219"/>
<dbReference type="Proteomes" id="UP000001011">
    <property type="component" value="Chromosome"/>
</dbReference>
<dbReference type="GO" id="GO:0005737">
    <property type="term" value="C:cytoplasm"/>
    <property type="evidence" value="ECO:0007669"/>
    <property type="project" value="UniProtKB-SubCell"/>
</dbReference>
<dbReference type="GO" id="GO:0005524">
    <property type="term" value="F:ATP binding"/>
    <property type="evidence" value="ECO:0007669"/>
    <property type="project" value="UniProtKB-UniRule"/>
</dbReference>
<dbReference type="GO" id="GO:0008763">
    <property type="term" value="F:UDP-N-acetylmuramate-L-alanine ligase activity"/>
    <property type="evidence" value="ECO:0007669"/>
    <property type="project" value="UniProtKB-UniRule"/>
</dbReference>
<dbReference type="GO" id="GO:0051301">
    <property type="term" value="P:cell division"/>
    <property type="evidence" value="ECO:0007669"/>
    <property type="project" value="UniProtKB-KW"/>
</dbReference>
<dbReference type="GO" id="GO:0071555">
    <property type="term" value="P:cell wall organization"/>
    <property type="evidence" value="ECO:0007669"/>
    <property type="project" value="UniProtKB-KW"/>
</dbReference>
<dbReference type="GO" id="GO:0009252">
    <property type="term" value="P:peptidoglycan biosynthetic process"/>
    <property type="evidence" value="ECO:0007669"/>
    <property type="project" value="UniProtKB-UniRule"/>
</dbReference>
<dbReference type="GO" id="GO:0008360">
    <property type="term" value="P:regulation of cell shape"/>
    <property type="evidence" value="ECO:0007669"/>
    <property type="project" value="UniProtKB-KW"/>
</dbReference>
<dbReference type="CDD" id="cd01983">
    <property type="entry name" value="SIMIBI"/>
    <property type="match status" value="1"/>
</dbReference>
<dbReference type="FunFam" id="3.40.1190.10:FF:000001">
    <property type="entry name" value="UDP-N-acetylmuramate--L-alanine ligase"/>
    <property type="match status" value="1"/>
</dbReference>
<dbReference type="FunFam" id="3.40.50.720:FF:000046">
    <property type="entry name" value="UDP-N-acetylmuramate--L-alanine ligase"/>
    <property type="match status" value="1"/>
</dbReference>
<dbReference type="FunFam" id="3.90.190.20:FF:000001">
    <property type="entry name" value="UDP-N-acetylmuramate--L-alanine ligase"/>
    <property type="match status" value="1"/>
</dbReference>
<dbReference type="Gene3D" id="3.90.190.20">
    <property type="entry name" value="Mur ligase, C-terminal domain"/>
    <property type="match status" value="1"/>
</dbReference>
<dbReference type="Gene3D" id="3.40.1190.10">
    <property type="entry name" value="Mur-like, catalytic domain"/>
    <property type="match status" value="1"/>
</dbReference>
<dbReference type="Gene3D" id="3.40.50.720">
    <property type="entry name" value="NAD(P)-binding Rossmann-like Domain"/>
    <property type="match status" value="1"/>
</dbReference>
<dbReference type="HAMAP" id="MF_00046">
    <property type="entry name" value="MurC"/>
    <property type="match status" value="1"/>
</dbReference>
<dbReference type="InterPro" id="IPR036565">
    <property type="entry name" value="Mur-like_cat_sf"/>
</dbReference>
<dbReference type="InterPro" id="IPR004101">
    <property type="entry name" value="Mur_ligase_C"/>
</dbReference>
<dbReference type="InterPro" id="IPR036615">
    <property type="entry name" value="Mur_ligase_C_dom_sf"/>
</dbReference>
<dbReference type="InterPro" id="IPR013221">
    <property type="entry name" value="Mur_ligase_cen"/>
</dbReference>
<dbReference type="InterPro" id="IPR000713">
    <property type="entry name" value="Mur_ligase_N"/>
</dbReference>
<dbReference type="InterPro" id="IPR050061">
    <property type="entry name" value="MurCDEF_pg_biosynth"/>
</dbReference>
<dbReference type="InterPro" id="IPR005758">
    <property type="entry name" value="UDP-N-AcMur_Ala_ligase_MurC"/>
</dbReference>
<dbReference type="NCBIfam" id="TIGR01082">
    <property type="entry name" value="murC"/>
    <property type="match status" value="1"/>
</dbReference>
<dbReference type="PANTHER" id="PTHR43445:SF3">
    <property type="entry name" value="UDP-N-ACETYLMURAMATE--L-ALANINE LIGASE"/>
    <property type="match status" value="1"/>
</dbReference>
<dbReference type="PANTHER" id="PTHR43445">
    <property type="entry name" value="UDP-N-ACETYLMURAMATE--L-ALANINE LIGASE-RELATED"/>
    <property type="match status" value="1"/>
</dbReference>
<dbReference type="Pfam" id="PF01225">
    <property type="entry name" value="Mur_ligase"/>
    <property type="match status" value="1"/>
</dbReference>
<dbReference type="Pfam" id="PF02875">
    <property type="entry name" value="Mur_ligase_C"/>
    <property type="match status" value="1"/>
</dbReference>
<dbReference type="Pfam" id="PF08245">
    <property type="entry name" value="Mur_ligase_M"/>
    <property type="match status" value="1"/>
</dbReference>
<dbReference type="SUPFAM" id="SSF51984">
    <property type="entry name" value="MurCD N-terminal domain"/>
    <property type="match status" value="1"/>
</dbReference>
<dbReference type="SUPFAM" id="SSF53623">
    <property type="entry name" value="MurD-like peptide ligases, catalytic domain"/>
    <property type="match status" value="1"/>
</dbReference>
<dbReference type="SUPFAM" id="SSF53244">
    <property type="entry name" value="MurD-like peptide ligases, peptide-binding domain"/>
    <property type="match status" value="1"/>
</dbReference>
<sequence length="491" mass="53654">MNTQQLAKLRTIVPEMRRVRHIHFVGIGGAGMGGIAEVLANEGYQISGSDLAPNSVTQHLTALGAQIYFHHRPENVLDASVVVVSTAISADNPEIVAAREARIPVIRRAEMLAELMRYRHGIAVAGTHGKTTTTAMLSSIYAEAGLDPTFVNGGLVKAAGTHARLGSSRYLIAEADESDASFLHLQPMVAIVTNIEADHMDTYQGDFENLKQTFINFLHNLPFYGRAVMCIDDPVVRELLPRVGRHITTYGFSDDADVQIASYRQEGPQGHFTLRRQDKPLIEVTLNAPGRHNALNAAAAVAVATEEGIEDEDILRALVGFQGTGRRFDFLGNFPLAPVNGKEGSAMLVDDYGHHPTEVDATIKAARAGWPDKRIVMLFQPHRYTRTRDLYDDFANVLSQVDVLLMLDVYAAGEPPIPGADSRALCRTIRNRGKLDPILVPDSESAPEMLAQILNGEDLILVQGAGNIGKIARKLAEHKLQPQLKDEEHHG</sequence>
<keyword id="KW-0067">ATP-binding</keyword>
<keyword id="KW-0131">Cell cycle</keyword>
<keyword id="KW-0132">Cell division</keyword>
<keyword id="KW-0133">Cell shape</keyword>
<keyword id="KW-0961">Cell wall biogenesis/degradation</keyword>
<keyword id="KW-0963">Cytoplasm</keyword>
<keyword id="KW-0436">Ligase</keyword>
<keyword id="KW-0547">Nucleotide-binding</keyword>
<keyword id="KW-0573">Peptidoglycan synthesis</keyword>
<name>MURC_YERPS</name>
<comment type="function">
    <text evidence="1">Cell wall formation.</text>
</comment>
<comment type="catalytic activity">
    <reaction evidence="1">
        <text>UDP-N-acetyl-alpha-D-muramate + L-alanine + ATP = UDP-N-acetyl-alpha-D-muramoyl-L-alanine + ADP + phosphate + H(+)</text>
        <dbReference type="Rhea" id="RHEA:23372"/>
        <dbReference type="ChEBI" id="CHEBI:15378"/>
        <dbReference type="ChEBI" id="CHEBI:30616"/>
        <dbReference type="ChEBI" id="CHEBI:43474"/>
        <dbReference type="ChEBI" id="CHEBI:57972"/>
        <dbReference type="ChEBI" id="CHEBI:70757"/>
        <dbReference type="ChEBI" id="CHEBI:83898"/>
        <dbReference type="ChEBI" id="CHEBI:456216"/>
        <dbReference type="EC" id="6.3.2.8"/>
    </reaction>
</comment>
<comment type="pathway">
    <text evidence="1">Cell wall biogenesis; peptidoglycan biosynthesis.</text>
</comment>
<comment type="subcellular location">
    <subcellularLocation>
        <location evidence="1">Cytoplasm</location>
    </subcellularLocation>
</comment>
<comment type="similarity">
    <text evidence="1">Belongs to the MurCDEF family.</text>
</comment>
<reference key="1">
    <citation type="journal article" date="2004" name="Proc. Natl. Acad. Sci. U.S.A.">
        <title>Insights into the evolution of Yersinia pestis through whole-genome comparison with Yersinia pseudotuberculosis.</title>
        <authorList>
            <person name="Chain P.S.G."/>
            <person name="Carniel E."/>
            <person name="Larimer F.W."/>
            <person name="Lamerdin J."/>
            <person name="Stoutland P.O."/>
            <person name="Regala W.M."/>
            <person name="Georgescu A.M."/>
            <person name="Vergez L.M."/>
            <person name="Land M.L."/>
            <person name="Motin V.L."/>
            <person name="Brubaker R.R."/>
            <person name="Fowler J."/>
            <person name="Hinnebusch J."/>
            <person name="Marceau M."/>
            <person name="Medigue C."/>
            <person name="Simonet M."/>
            <person name="Chenal-Francisque V."/>
            <person name="Souza B."/>
            <person name="Dacheux D."/>
            <person name="Elliott J.M."/>
            <person name="Derbise A."/>
            <person name="Hauser L.J."/>
            <person name="Garcia E."/>
        </authorList>
    </citation>
    <scope>NUCLEOTIDE SEQUENCE [LARGE SCALE GENOMIC DNA]</scope>
    <source>
        <strain>IP32953</strain>
    </source>
</reference>